<reference key="1">
    <citation type="submission" date="2008-02" db="EMBL/GenBank/DDBJ databases">
        <title>Complete sequence of Yersinia pseudotuberculosis YPIII.</title>
        <authorList>
            <consortium name="US DOE Joint Genome Institute"/>
            <person name="Copeland A."/>
            <person name="Lucas S."/>
            <person name="Lapidus A."/>
            <person name="Glavina del Rio T."/>
            <person name="Dalin E."/>
            <person name="Tice H."/>
            <person name="Bruce D."/>
            <person name="Goodwin L."/>
            <person name="Pitluck S."/>
            <person name="Munk A.C."/>
            <person name="Brettin T."/>
            <person name="Detter J.C."/>
            <person name="Han C."/>
            <person name="Tapia R."/>
            <person name="Schmutz J."/>
            <person name="Larimer F."/>
            <person name="Land M."/>
            <person name="Hauser L."/>
            <person name="Challacombe J.F."/>
            <person name="Green L."/>
            <person name="Lindler L.E."/>
            <person name="Nikolich M.P."/>
            <person name="Richardson P."/>
        </authorList>
    </citation>
    <scope>NUCLEOTIDE SEQUENCE [LARGE SCALE GENOMIC DNA]</scope>
    <source>
        <strain>YPIII</strain>
    </source>
</reference>
<gene>
    <name evidence="1" type="primary">mdtH</name>
    <name type="ordered locus">YPK_2162</name>
</gene>
<dbReference type="EMBL" id="CP000950">
    <property type="protein sequence ID" value="ACA68446.1"/>
    <property type="molecule type" value="Genomic_DNA"/>
</dbReference>
<dbReference type="RefSeq" id="WP_002211217.1">
    <property type="nucleotide sequence ID" value="NZ_CP009792.1"/>
</dbReference>
<dbReference type="SMR" id="B1JLM7"/>
<dbReference type="GeneID" id="57976620"/>
<dbReference type="KEGG" id="ypy:YPK_2162"/>
<dbReference type="PATRIC" id="fig|502800.11.peg.2836"/>
<dbReference type="GO" id="GO:0005886">
    <property type="term" value="C:plasma membrane"/>
    <property type="evidence" value="ECO:0007669"/>
    <property type="project" value="UniProtKB-SubCell"/>
</dbReference>
<dbReference type="GO" id="GO:0022857">
    <property type="term" value="F:transmembrane transporter activity"/>
    <property type="evidence" value="ECO:0007669"/>
    <property type="project" value="UniProtKB-UniRule"/>
</dbReference>
<dbReference type="CDD" id="cd17329">
    <property type="entry name" value="MFS_MdtH_MDR_like"/>
    <property type="match status" value="1"/>
</dbReference>
<dbReference type="Gene3D" id="1.20.1250.20">
    <property type="entry name" value="MFS general substrate transporter like domains"/>
    <property type="match status" value="1"/>
</dbReference>
<dbReference type="HAMAP" id="MF_01529">
    <property type="entry name" value="MFS_MdtH"/>
    <property type="match status" value="1"/>
</dbReference>
<dbReference type="InterPro" id="IPR011701">
    <property type="entry name" value="MFS"/>
</dbReference>
<dbReference type="InterPro" id="IPR020846">
    <property type="entry name" value="MFS_dom"/>
</dbReference>
<dbReference type="InterPro" id="IPR036259">
    <property type="entry name" value="MFS_trans_sf"/>
</dbReference>
<dbReference type="InterPro" id="IPR050171">
    <property type="entry name" value="MFS_Transporters"/>
</dbReference>
<dbReference type="InterPro" id="IPR022855">
    <property type="entry name" value="Multidrug-R_MdtH"/>
</dbReference>
<dbReference type="NCBIfam" id="NF008650">
    <property type="entry name" value="PRK11646.1"/>
    <property type="match status" value="1"/>
</dbReference>
<dbReference type="PANTHER" id="PTHR23517:SF2">
    <property type="entry name" value="MULTIDRUG RESISTANCE PROTEIN MDTH"/>
    <property type="match status" value="1"/>
</dbReference>
<dbReference type="PANTHER" id="PTHR23517">
    <property type="entry name" value="RESISTANCE PROTEIN MDTM, PUTATIVE-RELATED-RELATED"/>
    <property type="match status" value="1"/>
</dbReference>
<dbReference type="Pfam" id="PF07690">
    <property type="entry name" value="MFS_1"/>
    <property type="match status" value="1"/>
</dbReference>
<dbReference type="SUPFAM" id="SSF103473">
    <property type="entry name" value="MFS general substrate transporter"/>
    <property type="match status" value="1"/>
</dbReference>
<dbReference type="PROSITE" id="PS50850">
    <property type="entry name" value="MFS"/>
    <property type="match status" value="1"/>
</dbReference>
<name>MDTH_YERPY</name>
<organism>
    <name type="scientific">Yersinia pseudotuberculosis serotype O:3 (strain YPIII)</name>
    <dbReference type="NCBI Taxonomy" id="502800"/>
    <lineage>
        <taxon>Bacteria</taxon>
        <taxon>Pseudomonadati</taxon>
        <taxon>Pseudomonadota</taxon>
        <taxon>Gammaproteobacteria</taxon>
        <taxon>Enterobacterales</taxon>
        <taxon>Yersiniaceae</taxon>
        <taxon>Yersinia</taxon>
    </lineage>
</organism>
<comment type="subcellular location">
    <subcellularLocation>
        <location evidence="1">Cell inner membrane</location>
        <topology evidence="1">Multi-pass membrane protein</topology>
    </subcellularLocation>
</comment>
<comment type="similarity">
    <text evidence="1">Belongs to the major facilitator superfamily. DHA1 family. MdtH (TC 2.A.1.2.21) subfamily.</text>
</comment>
<keyword id="KW-0997">Cell inner membrane</keyword>
<keyword id="KW-1003">Cell membrane</keyword>
<keyword id="KW-0472">Membrane</keyword>
<keyword id="KW-0812">Transmembrane</keyword>
<keyword id="KW-1133">Transmembrane helix</keyword>
<keyword id="KW-0813">Transport</keyword>
<evidence type="ECO:0000255" key="1">
    <source>
        <dbReference type="HAMAP-Rule" id="MF_01529"/>
    </source>
</evidence>
<proteinExistence type="inferred from homology"/>
<sequence>MALVSQARSLGKYFLLFDNLLVVLGFFVVFPLISIRFVDQLGWAALVVGLALGLRQLVQQGLGIFGGAIADRFGAKPMIVTGMLMRAAGFALMAMADEPWILWLACALSGLGGTLFDPPRTALVIKLTRPHERGRFYSLLMMQDSAGAVIGALIGSWLLQYDFHFVCWTGAAIFVLAAGWNAWLLPAYRISTVRAPMKEGLMRVLRDRRFVTYVLTLTGYYMLAVQVMLMLPIVVNELAGSPAAVKWMYAIEAALSLTLLYPLARWSEKRFSLEQRLMAGLLIMTLSLFPIGMITHLQTLFMFICFFYMGSILAEPARETLGASLADSRARGSYMGFSRLGLALGGALGYTGGGWMYDTGKTLDMPELPWFLLGIIGLITLAGLYWQFNRRRIESAMLSSS</sequence>
<accession>B1JLM7</accession>
<feature type="chain" id="PRO_1000200815" description="Multidrug resistance protein MdtH">
    <location>
        <begin position="1"/>
        <end position="401"/>
    </location>
</feature>
<feature type="transmembrane region" description="Helical" evidence="1">
    <location>
        <begin position="13"/>
        <end position="33"/>
    </location>
</feature>
<feature type="transmembrane region" description="Helical" evidence="1">
    <location>
        <begin position="34"/>
        <end position="54"/>
    </location>
</feature>
<feature type="transmembrane region" description="Helical" evidence="1">
    <location>
        <begin position="99"/>
        <end position="116"/>
    </location>
</feature>
<feature type="transmembrane region" description="Helical" evidence="1">
    <location>
        <begin position="139"/>
        <end position="159"/>
    </location>
</feature>
<feature type="transmembrane region" description="Helical" evidence="1">
    <location>
        <begin position="165"/>
        <end position="185"/>
    </location>
</feature>
<feature type="transmembrane region" description="Helical" evidence="1">
    <location>
        <begin position="214"/>
        <end position="234"/>
    </location>
</feature>
<feature type="transmembrane region" description="Helical" evidence="1">
    <location>
        <begin position="243"/>
        <end position="263"/>
    </location>
</feature>
<feature type="transmembrane region" description="Helical" evidence="1">
    <location>
        <begin position="277"/>
        <end position="297"/>
    </location>
</feature>
<feature type="transmembrane region" description="Helical" evidence="1">
    <location>
        <begin position="299"/>
        <end position="319"/>
    </location>
</feature>
<feature type="transmembrane region" description="Helical" evidence="1">
    <location>
        <begin position="340"/>
        <end position="360"/>
    </location>
</feature>
<feature type="transmembrane region" description="Helical" evidence="1">
    <location>
        <begin position="368"/>
        <end position="388"/>
    </location>
</feature>
<protein>
    <recommendedName>
        <fullName evidence="1">Multidrug resistance protein MdtH</fullName>
    </recommendedName>
</protein>